<protein>
    <recommendedName>
        <fullName evidence="1">UPF0231 protein YPDSF_2941</fullName>
    </recommendedName>
</protein>
<sequence length="119" mass="13772">MDYEFLRDLTGQVLVKFSMGHEVIGHWLNEEIKGDLVKLDHIETAADGVRGSERQWQLPGHEYTLWLDGEEVMVRANQLDLDGDEMEEGMNYYDEESLCLCGLEDFLLVLKGYRAFITQ</sequence>
<accession>A4TPU1</accession>
<name>Y2941_YERPP</name>
<feature type="chain" id="PRO_1000064378" description="UPF0231 protein YPDSF_2941">
    <location>
        <begin position="1"/>
        <end position="119"/>
    </location>
</feature>
<comment type="similarity">
    <text evidence="1">Belongs to the UPF0231 family.</text>
</comment>
<gene>
    <name type="ordered locus">YPDSF_2941</name>
</gene>
<dbReference type="EMBL" id="CP000668">
    <property type="protein sequence ID" value="ABP41303.1"/>
    <property type="molecule type" value="Genomic_DNA"/>
</dbReference>
<dbReference type="SMR" id="A4TPU1"/>
<dbReference type="KEGG" id="ypp:YPDSF_2941"/>
<dbReference type="PATRIC" id="fig|386656.14.peg.1426"/>
<dbReference type="HAMAP" id="MF_01053">
    <property type="entry name" value="UPF0231"/>
    <property type="match status" value="1"/>
</dbReference>
<dbReference type="InterPro" id="IPR008249">
    <property type="entry name" value="UPF0231"/>
</dbReference>
<dbReference type="NCBIfam" id="NF003574">
    <property type="entry name" value="PRK05248.1-1"/>
    <property type="match status" value="1"/>
</dbReference>
<dbReference type="NCBIfam" id="NF003576">
    <property type="entry name" value="PRK05248.1-3"/>
    <property type="match status" value="1"/>
</dbReference>
<dbReference type="Pfam" id="PF06062">
    <property type="entry name" value="UPF0231"/>
    <property type="match status" value="1"/>
</dbReference>
<dbReference type="PIRSF" id="PIRSF006287">
    <property type="entry name" value="UCP006287"/>
    <property type="match status" value="1"/>
</dbReference>
<reference key="1">
    <citation type="submission" date="2007-02" db="EMBL/GenBank/DDBJ databases">
        <title>Complete sequence of chromosome of Yersinia pestis Pestoides F.</title>
        <authorList>
            <consortium name="US DOE Joint Genome Institute"/>
            <person name="Copeland A."/>
            <person name="Lucas S."/>
            <person name="Lapidus A."/>
            <person name="Barry K."/>
            <person name="Detter J.C."/>
            <person name="Glavina del Rio T."/>
            <person name="Hammon N."/>
            <person name="Israni S."/>
            <person name="Dalin E."/>
            <person name="Tice H."/>
            <person name="Pitluck S."/>
            <person name="Di Bartolo G."/>
            <person name="Chain P."/>
            <person name="Malfatti S."/>
            <person name="Shin M."/>
            <person name="Vergez L."/>
            <person name="Schmutz J."/>
            <person name="Larimer F."/>
            <person name="Land M."/>
            <person name="Hauser L."/>
            <person name="Worsham P."/>
            <person name="Chu M."/>
            <person name="Bearden S."/>
            <person name="Garcia E."/>
            <person name="Richardson P."/>
        </authorList>
    </citation>
    <scope>NUCLEOTIDE SEQUENCE [LARGE SCALE GENOMIC DNA]</scope>
    <source>
        <strain>Pestoides F</strain>
    </source>
</reference>
<organism>
    <name type="scientific">Yersinia pestis (strain Pestoides F)</name>
    <dbReference type="NCBI Taxonomy" id="386656"/>
    <lineage>
        <taxon>Bacteria</taxon>
        <taxon>Pseudomonadati</taxon>
        <taxon>Pseudomonadota</taxon>
        <taxon>Gammaproteobacteria</taxon>
        <taxon>Enterobacterales</taxon>
        <taxon>Yersiniaceae</taxon>
        <taxon>Yersinia</taxon>
    </lineage>
</organism>
<evidence type="ECO:0000255" key="1">
    <source>
        <dbReference type="HAMAP-Rule" id="MF_01053"/>
    </source>
</evidence>
<proteinExistence type="inferred from homology"/>